<organism>
    <name type="scientific">Arabidopsis thaliana</name>
    <name type="common">Mouse-ear cress</name>
    <dbReference type="NCBI Taxonomy" id="3702"/>
    <lineage>
        <taxon>Eukaryota</taxon>
        <taxon>Viridiplantae</taxon>
        <taxon>Streptophyta</taxon>
        <taxon>Embryophyta</taxon>
        <taxon>Tracheophyta</taxon>
        <taxon>Spermatophyta</taxon>
        <taxon>Magnoliopsida</taxon>
        <taxon>eudicotyledons</taxon>
        <taxon>Gunneridae</taxon>
        <taxon>Pentapetalae</taxon>
        <taxon>rosids</taxon>
        <taxon>malvids</taxon>
        <taxon>Brassicales</taxon>
        <taxon>Brassicaceae</taxon>
        <taxon>Camelineae</taxon>
        <taxon>Arabidopsis</taxon>
    </lineage>
</organism>
<feature type="chain" id="PRO_0000210267" description="Syntaxin-81">
    <location>
        <begin position="1"/>
        <end position="310"/>
    </location>
</feature>
<feature type="topological domain" description="Cytoplasmic" evidence="1">
    <location>
        <begin position="1"/>
        <end position="289"/>
    </location>
</feature>
<feature type="transmembrane region" description="Helical; Anchor for type IV membrane protein" evidence="1">
    <location>
        <begin position="290"/>
        <end position="310"/>
    </location>
</feature>
<feature type="coiled-coil region" evidence="1">
    <location>
        <begin position="77"/>
        <end position="114"/>
    </location>
</feature>
<feature type="sequence conflict" description="In Ref. 4; AAM63632." evidence="3" ref="4">
    <original>N</original>
    <variation>K</variation>
    <location>
        <position position="17"/>
    </location>
</feature>
<name>SYP81_ARATH</name>
<proteinExistence type="evidence at protein level"/>
<keyword id="KW-0175">Coiled coil</keyword>
<keyword id="KW-0472">Membrane</keyword>
<keyword id="KW-0653">Protein transport</keyword>
<keyword id="KW-1185">Reference proteome</keyword>
<keyword id="KW-0812">Transmembrane</keyword>
<keyword id="KW-1133">Transmembrane helix</keyword>
<keyword id="KW-0813">Transport</keyword>
<evidence type="ECO:0000255" key="1"/>
<evidence type="ECO:0000269" key="2">
    <source>
    </source>
</evidence>
<evidence type="ECO:0000305" key="3"/>
<comment type="function">
    <text evidence="3">Vesicle trafficking protein that functions in the secretory pathway.</text>
</comment>
<comment type="subunit">
    <text evidence="2 3">Part of the t-SNARE complex. Interacts with MAG2 (PubMed:17194767).</text>
</comment>
<comment type="subcellular location">
    <subcellularLocation>
        <location evidence="1">Membrane</location>
        <topology evidence="1">Single-pass type IV membrane protein</topology>
    </subcellularLocation>
</comment>
<comment type="similarity">
    <text evidence="3">Belongs to the syntaxin family.</text>
</comment>
<comment type="sequence caution" evidence="3">
    <conflict type="erroneous gene model prediction">
        <sequence resource="EMBL-CDS" id="AAG50888"/>
    </conflict>
</comment>
<dbReference type="EMBL" id="AC025294">
    <property type="protein sequence ID" value="AAG50888.1"/>
    <property type="status" value="ALT_SEQ"/>
    <property type="molecule type" value="Genomic_DNA"/>
</dbReference>
<dbReference type="EMBL" id="CP002684">
    <property type="protein sequence ID" value="AEE32709.1"/>
    <property type="molecule type" value="Genomic_DNA"/>
</dbReference>
<dbReference type="EMBL" id="BT002917">
    <property type="protein sequence ID" value="AAO22733.1"/>
    <property type="molecule type" value="mRNA"/>
</dbReference>
<dbReference type="EMBL" id="BT004352">
    <property type="protein sequence ID" value="AAO42346.1"/>
    <property type="molecule type" value="mRNA"/>
</dbReference>
<dbReference type="EMBL" id="AY086569">
    <property type="protein sequence ID" value="AAM63632.1"/>
    <property type="molecule type" value="mRNA"/>
</dbReference>
<dbReference type="RefSeq" id="NP_564597.1">
    <property type="nucleotide sequence ID" value="NM_104052.3"/>
</dbReference>
<dbReference type="SMR" id="P59277"/>
<dbReference type="FunCoup" id="P59277">
    <property type="interactions" value="3223"/>
</dbReference>
<dbReference type="IntAct" id="P59277">
    <property type="interactions" value="4"/>
</dbReference>
<dbReference type="STRING" id="3702.P59277"/>
<dbReference type="iPTMnet" id="P59277"/>
<dbReference type="PaxDb" id="3702-AT1G51740.1"/>
<dbReference type="ProteomicsDB" id="233067"/>
<dbReference type="EnsemblPlants" id="AT1G51740.1">
    <property type="protein sequence ID" value="AT1G51740.1"/>
    <property type="gene ID" value="AT1G51740"/>
</dbReference>
<dbReference type="GeneID" id="841599"/>
<dbReference type="Gramene" id="AT1G51740.1">
    <property type="protein sequence ID" value="AT1G51740.1"/>
    <property type="gene ID" value="AT1G51740"/>
</dbReference>
<dbReference type="KEGG" id="ath:AT1G51740"/>
<dbReference type="Araport" id="AT1G51740"/>
<dbReference type="TAIR" id="AT1G51740">
    <property type="gene designation" value="SYP81"/>
</dbReference>
<dbReference type="eggNOG" id="KOG3894">
    <property type="taxonomic scope" value="Eukaryota"/>
</dbReference>
<dbReference type="HOGENOM" id="CLU_054329_0_0_1"/>
<dbReference type="InParanoid" id="P59277"/>
<dbReference type="OMA" id="FVFQCRE"/>
<dbReference type="PhylomeDB" id="P59277"/>
<dbReference type="PRO" id="PR:P59277"/>
<dbReference type="Proteomes" id="UP000006548">
    <property type="component" value="Chromosome 1"/>
</dbReference>
<dbReference type="ExpressionAtlas" id="P59277">
    <property type="expression patterns" value="baseline and differential"/>
</dbReference>
<dbReference type="GO" id="GO:0016020">
    <property type="term" value="C:membrane"/>
    <property type="evidence" value="ECO:0007669"/>
    <property type="project" value="UniProtKB-SubCell"/>
</dbReference>
<dbReference type="GO" id="GO:0015031">
    <property type="term" value="P:protein transport"/>
    <property type="evidence" value="ECO:0007669"/>
    <property type="project" value="UniProtKB-KW"/>
</dbReference>
<dbReference type="GO" id="GO:0016192">
    <property type="term" value="P:vesicle-mediated transport"/>
    <property type="evidence" value="ECO:0007669"/>
    <property type="project" value="InterPro"/>
</dbReference>
<dbReference type="FunFam" id="1.20.5.110:FF:000039">
    <property type="entry name" value="Syntaxin-81 like"/>
    <property type="match status" value="1"/>
</dbReference>
<dbReference type="Gene3D" id="1.20.5.110">
    <property type="match status" value="1"/>
</dbReference>
<dbReference type="InterPro" id="IPR010989">
    <property type="entry name" value="SNARE"/>
</dbReference>
<dbReference type="InterPro" id="IPR019529">
    <property type="entry name" value="Syntaxin-18_N"/>
</dbReference>
<dbReference type="PANTHER" id="PTHR15959">
    <property type="entry name" value="SYNTAXIN-18"/>
    <property type="match status" value="1"/>
</dbReference>
<dbReference type="PANTHER" id="PTHR15959:SF0">
    <property type="entry name" value="SYNTAXIN-18"/>
    <property type="match status" value="1"/>
</dbReference>
<dbReference type="Pfam" id="PF10496">
    <property type="entry name" value="Syntaxin-18_N"/>
    <property type="match status" value="1"/>
</dbReference>
<dbReference type="SUPFAM" id="SSF47661">
    <property type="entry name" value="t-snare proteins"/>
    <property type="match status" value="1"/>
</dbReference>
<gene>
    <name type="primary">SYP81</name>
    <name type="ordered locus">At1g51740</name>
    <name type="ORF">F19C24.5</name>
</gene>
<reference key="1">
    <citation type="journal article" date="2000" name="Nature">
        <title>Sequence and analysis of chromosome 1 of the plant Arabidopsis thaliana.</title>
        <authorList>
            <person name="Theologis A."/>
            <person name="Ecker J.R."/>
            <person name="Palm C.J."/>
            <person name="Federspiel N.A."/>
            <person name="Kaul S."/>
            <person name="White O."/>
            <person name="Alonso J."/>
            <person name="Altafi H."/>
            <person name="Araujo R."/>
            <person name="Bowman C.L."/>
            <person name="Brooks S.Y."/>
            <person name="Buehler E."/>
            <person name="Chan A."/>
            <person name="Chao Q."/>
            <person name="Chen H."/>
            <person name="Cheuk R.F."/>
            <person name="Chin C.W."/>
            <person name="Chung M.K."/>
            <person name="Conn L."/>
            <person name="Conway A.B."/>
            <person name="Conway A.R."/>
            <person name="Creasy T.H."/>
            <person name="Dewar K."/>
            <person name="Dunn P."/>
            <person name="Etgu P."/>
            <person name="Feldblyum T.V."/>
            <person name="Feng J.-D."/>
            <person name="Fong B."/>
            <person name="Fujii C.Y."/>
            <person name="Gill J.E."/>
            <person name="Goldsmith A.D."/>
            <person name="Haas B."/>
            <person name="Hansen N.F."/>
            <person name="Hughes B."/>
            <person name="Huizar L."/>
            <person name="Hunter J.L."/>
            <person name="Jenkins J."/>
            <person name="Johnson-Hopson C."/>
            <person name="Khan S."/>
            <person name="Khaykin E."/>
            <person name="Kim C.J."/>
            <person name="Koo H.L."/>
            <person name="Kremenetskaia I."/>
            <person name="Kurtz D.B."/>
            <person name="Kwan A."/>
            <person name="Lam B."/>
            <person name="Langin-Hooper S."/>
            <person name="Lee A."/>
            <person name="Lee J.M."/>
            <person name="Lenz C.A."/>
            <person name="Li J.H."/>
            <person name="Li Y.-P."/>
            <person name="Lin X."/>
            <person name="Liu S.X."/>
            <person name="Liu Z.A."/>
            <person name="Luros J.S."/>
            <person name="Maiti R."/>
            <person name="Marziali A."/>
            <person name="Militscher J."/>
            <person name="Miranda M."/>
            <person name="Nguyen M."/>
            <person name="Nierman W.C."/>
            <person name="Osborne B.I."/>
            <person name="Pai G."/>
            <person name="Peterson J."/>
            <person name="Pham P.K."/>
            <person name="Rizzo M."/>
            <person name="Rooney T."/>
            <person name="Rowley D."/>
            <person name="Sakano H."/>
            <person name="Salzberg S.L."/>
            <person name="Schwartz J.R."/>
            <person name="Shinn P."/>
            <person name="Southwick A.M."/>
            <person name="Sun H."/>
            <person name="Tallon L.J."/>
            <person name="Tambunga G."/>
            <person name="Toriumi M.J."/>
            <person name="Town C.D."/>
            <person name="Utterback T."/>
            <person name="Van Aken S."/>
            <person name="Vaysberg M."/>
            <person name="Vysotskaia V.S."/>
            <person name="Walker M."/>
            <person name="Wu D."/>
            <person name="Yu G."/>
            <person name="Fraser C.M."/>
            <person name="Venter J.C."/>
            <person name="Davis R.W."/>
        </authorList>
    </citation>
    <scope>NUCLEOTIDE SEQUENCE [LARGE SCALE GENOMIC DNA]</scope>
    <source>
        <strain>cv. Columbia</strain>
    </source>
</reference>
<reference key="2">
    <citation type="journal article" date="2017" name="Plant J.">
        <title>Araport11: a complete reannotation of the Arabidopsis thaliana reference genome.</title>
        <authorList>
            <person name="Cheng C.Y."/>
            <person name="Krishnakumar V."/>
            <person name="Chan A.P."/>
            <person name="Thibaud-Nissen F."/>
            <person name="Schobel S."/>
            <person name="Town C.D."/>
        </authorList>
    </citation>
    <scope>GENOME REANNOTATION</scope>
    <source>
        <strain>cv. Columbia</strain>
    </source>
</reference>
<reference key="3">
    <citation type="journal article" date="2003" name="Science">
        <title>Empirical analysis of transcriptional activity in the Arabidopsis genome.</title>
        <authorList>
            <person name="Yamada K."/>
            <person name="Lim J."/>
            <person name="Dale J.M."/>
            <person name="Chen H."/>
            <person name="Shinn P."/>
            <person name="Palm C.J."/>
            <person name="Southwick A.M."/>
            <person name="Wu H.C."/>
            <person name="Kim C.J."/>
            <person name="Nguyen M."/>
            <person name="Pham P.K."/>
            <person name="Cheuk R.F."/>
            <person name="Karlin-Newmann G."/>
            <person name="Liu S.X."/>
            <person name="Lam B."/>
            <person name="Sakano H."/>
            <person name="Wu T."/>
            <person name="Yu G."/>
            <person name="Miranda M."/>
            <person name="Quach H.L."/>
            <person name="Tripp M."/>
            <person name="Chang C.H."/>
            <person name="Lee J.M."/>
            <person name="Toriumi M.J."/>
            <person name="Chan M.M."/>
            <person name="Tang C.C."/>
            <person name="Onodera C.S."/>
            <person name="Deng J.M."/>
            <person name="Akiyama K."/>
            <person name="Ansari Y."/>
            <person name="Arakawa T."/>
            <person name="Banh J."/>
            <person name="Banno F."/>
            <person name="Bowser L."/>
            <person name="Brooks S.Y."/>
            <person name="Carninci P."/>
            <person name="Chao Q."/>
            <person name="Choy N."/>
            <person name="Enju A."/>
            <person name="Goldsmith A.D."/>
            <person name="Gurjal M."/>
            <person name="Hansen N.F."/>
            <person name="Hayashizaki Y."/>
            <person name="Johnson-Hopson C."/>
            <person name="Hsuan V.W."/>
            <person name="Iida K."/>
            <person name="Karnes M."/>
            <person name="Khan S."/>
            <person name="Koesema E."/>
            <person name="Ishida J."/>
            <person name="Jiang P.X."/>
            <person name="Jones T."/>
            <person name="Kawai J."/>
            <person name="Kamiya A."/>
            <person name="Meyers C."/>
            <person name="Nakajima M."/>
            <person name="Narusaka M."/>
            <person name="Seki M."/>
            <person name="Sakurai T."/>
            <person name="Satou M."/>
            <person name="Tamse R."/>
            <person name="Vaysberg M."/>
            <person name="Wallender E.K."/>
            <person name="Wong C."/>
            <person name="Yamamura Y."/>
            <person name="Yuan S."/>
            <person name="Shinozaki K."/>
            <person name="Davis R.W."/>
            <person name="Theologis A."/>
            <person name="Ecker J.R."/>
        </authorList>
    </citation>
    <scope>NUCLEOTIDE SEQUENCE [LARGE SCALE MRNA]</scope>
    <source>
        <strain>cv. Columbia</strain>
    </source>
</reference>
<reference key="4">
    <citation type="submission" date="2002-03" db="EMBL/GenBank/DDBJ databases">
        <title>Full-length cDNA from Arabidopsis thaliana.</title>
        <authorList>
            <person name="Brover V.V."/>
            <person name="Troukhan M.E."/>
            <person name="Alexandrov N.A."/>
            <person name="Lu Y.-P."/>
            <person name="Flavell R.B."/>
            <person name="Feldmann K.A."/>
        </authorList>
    </citation>
    <scope>NUCLEOTIDE SEQUENCE [LARGE SCALE MRNA]</scope>
</reference>
<reference key="5">
    <citation type="journal article" date="2006" name="Plant Cell">
        <title>MAIGO2 is involved in exit of seed storage proteins from the endoplasmic reticulum in Arabidopsis thaliana.</title>
        <authorList>
            <person name="Li L."/>
            <person name="Shimada T."/>
            <person name="Takahashi H."/>
            <person name="Ueda H."/>
            <person name="Fukao Y."/>
            <person name="Kondo M."/>
            <person name="Nishimura M."/>
            <person name="Hara-Nishimura I."/>
        </authorList>
    </citation>
    <scope>INTERACTION WITH MAG2</scope>
</reference>
<protein>
    <recommendedName>
        <fullName>Syntaxin-81</fullName>
        <shortName>AtSYP81</shortName>
    </recommendedName>
</protein>
<sequence length="310" mass="35573">MSRFRDRTEDFKDSVRNSAVSIGYNESKVASTMASFIIHKPKERSPFTKAAFKTLDSIKELELFMLKHRKDYVDLHRTTEQEKDSIEQEVAAFIKACKEQIDILINSIRNEEANSKGWLGLPADNFNADSIAHKHGVVLILSEKLHSVTAQFDQLRATRFQDIINRAMPRRKPKRVIKEATPINTTLGNSESIEPDEIQAQPRRLQQQQLLDDETQALQVELSNLLDGARQTETKMVEMSALNHLMATHVLQQAQQIEFLYDQAVEATKNVELGNKELSQAIQRNSSSRTFLLLFFFVLTFSVLFLDWYS</sequence>
<accession>P59277</accession>
<accession>Q84JQ3</accession>
<accession>Q9C8I2</accession>